<evidence type="ECO:0000250" key="1"/>
<evidence type="ECO:0000255" key="2"/>
<evidence type="ECO:0000305" key="3"/>
<dbReference type="EMBL" id="CM000070">
    <property type="protein sequence ID" value="EAL28458.1"/>
    <property type="molecule type" value="Genomic_DNA"/>
</dbReference>
<dbReference type="RefSeq" id="XP_001359313.1">
    <property type="nucleotide sequence ID" value="XM_001359276.3"/>
</dbReference>
<dbReference type="FunCoup" id="Q296J9">
    <property type="interactions" value="738"/>
</dbReference>
<dbReference type="EnsemblMetazoa" id="FBtr0285944">
    <property type="protein sequence ID" value="FBpp0284382"/>
    <property type="gene ID" value="FBgn0080499"/>
</dbReference>
<dbReference type="KEGG" id="dpo:4802384"/>
<dbReference type="eggNOG" id="ENOG502RS62">
    <property type="taxonomic scope" value="Eukaryota"/>
</dbReference>
<dbReference type="HOGENOM" id="CLU_083708_0_0_1"/>
<dbReference type="InParanoid" id="Q296J9"/>
<dbReference type="OMA" id="WSIWFPL"/>
<dbReference type="PhylomeDB" id="Q296J9"/>
<dbReference type="Proteomes" id="UP000001819">
    <property type="component" value="Chromosome 2"/>
</dbReference>
<dbReference type="Bgee" id="FBgn0080499">
    <property type="expression patterns" value="Expressed in insect adult head and 2 other cell types or tissues"/>
</dbReference>
<dbReference type="GO" id="GO:0005635">
    <property type="term" value="C:nuclear envelope"/>
    <property type="evidence" value="ECO:0000250"/>
    <property type="project" value="UniProtKB"/>
</dbReference>
<dbReference type="GO" id="GO:0005637">
    <property type="term" value="C:nuclear inner membrane"/>
    <property type="evidence" value="ECO:0007669"/>
    <property type="project" value="UniProtKB-SubCell"/>
</dbReference>
<dbReference type="InterPro" id="IPR033580">
    <property type="entry name" value="Nurim-like"/>
</dbReference>
<dbReference type="PANTHER" id="PTHR31040">
    <property type="entry name" value="NURIM"/>
    <property type="match status" value="1"/>
</dbReference>
<dbReference type="PANTHER" id="PTHR31040:SF1">
    <property type="entry name" value="NURIM"/>
    <property type="match status" value="1"/>
</dbReference>
<feature type="chain" id="PRO_0000299404" description="Nurim homolog">
    <location>
        <begin position="1"/>
        <end position="253"/>
    </location>
</feature>
<feature type="topological domain" description="Nuclear" evidence="2">
    <location>
        <begin position="1"/>
        <end position="2"/>
    </location>
</feature>
<feature type="transmembrane region" description="Helical" evidence="2">
    <location>
        <begin position="3"/>
        <end position="30"/>
    </location>
</feature>
<feature type="topological domain" description="Perinuclear space" evidence="2">
    <location>
        <begin position="31"/>
        <end position="56"/>
    </location>
</feature>
<feature type="transmembrane region" description="Helical" evidence="2">
    <location>
        <begin position="57"/>
        <end position="78"/>
    </location>
</feature>
<feature type="topological domain" description="Nuclear" evidence="2">
    <location>
        <begin position="79"/>
        <end position="96"/>
    </location>
</feature>
<feature type="transmembrane region" description="Helical" evidence="2">
    <location>
        <begin position="97"/>
        <end position="113"/>
    </location>
</feature>
<feature type="topological domain" description="Perinuclear space" evidence="2">
    <location>
        <begin position="114"/>
        <end position="132"/>
    </location>
</feature>
<feature type="transmembrane region" description="Helical" evidence="2">
    <location>
        <begin position="133"/>
        <end position="161"/>
    </location>
</feature>
<feature type="topological domain" description="Nuclear" evidence="2">
    <location>
        <begin position="162"/>
        <end position="188"/>
    </location>
</feature>
<feature type="transmembrane region" description="Helical" evidence="2">
    <location>
        <begin position="189"/>
        <end position="207"/>
    </location>
</feature>
<feature type="topological domain" description="Perinuclear space" evidence="2">
    <location>
        <begin position="208"/>
        <end position="213"/>
    </location>
</feature>
<feature type="transmembrane region" description="Helical" evidence="2">
    <location>
        <begin position="214"/>
        <end position="231"/>
    </location>
</feature>
<feature type="topological domain" description="Nuclear" evidence="2">
    <location>
        <begin position="232"/>
        <end position="253"/>
    </location>
</feature>
<keyword id="KW-0472">Membrane</keyword>
<keyword id="KW-0539">Nucleus</keyword>
<keyword id="KW-1185">Reference proteome</keyword>
<keyword id="KW-0812">Transmembrane</keyword>
<keyword id="KW-1133">Transmembrane helix</keyword>
<comment type="subcellular location">
    <subcellularLocation>
        <location evidence="1">Nucleus inner membrane</location>
        <topology evidence="1">Multi-pass membrane protein</topology>
    </subcellularLocation>
</comment>
<comment type="similarity">
    <text evidence="3">Belongs to the nurim family.</text>
</comment>
<protein>
    <recommendedName>
        <fullName>Nurim homolog</fullName>
    </recommendedName>
    <alternativeName>
        <fullName>Nuclear envelope membrane protein</fullName>
    </alternativeName>
    <alternativeName>
        <fullName>Nuclear rim protein</fullName>
    </alternativeName>
</protein>
<organism>
    <name type="scientific">Drosophila pseudoobscura pseudoobscura</name>
    <name type="common">Fruit fly</name>
    <dbReference type="NCBI Taxonomy" id="46245"/>
    <lineage>
        <taxon>Eukaryota</taxon>
        <taxon>Metazoa</taxon>
        <taxon>Ecdysozoa</taxon>
        <taxon>Arthropoda</taxon>
        <taxon>Hexapoda</taxon>
        <taxon>Insecta</taxon>
        <taxon>Pterygota</taxon>
        <taxon>Neoptera</taxon>
        <taxon>Endopterygota</taxon>
        <taxon>Diptera</taxon>
        <taxon>Brachycera</taxon>
        <taxon>Muscomorpha</taxon>
        <taxon>Ephydroidea</taxon>
        <taxon>Drosophilidae</taxon>
        <taxon>Drosophila</taxon>
        <taxon>Sophophora</taxon>
    </lineage>
</organism>
<accession>Q296J9</accession>
<name>NRM_DROPS</name>
<gene>
    <name type="primary">nrm</name>
    <name type="ORF">GA20505</name>
</gene>
<proteinExistence type="inferred from homology"/>
<sequence>MATFAKVMLLLSSVATFGYTFFVVGKLMLFLSTPRSISKAHTWIFNLLDNKSRLETAYGPIVFDTLYLIGFIFQHSFLKSALVKNLWRKLGLAAAERTIYSLTSSICLHYLLKNWLPAQSIVLWQVDVDESAPLWWTFVVTHGLGWAVIFGGSLIMDLPELLGVKQVYYDLKEYGEPVAYKSSELRNLYSHVRHPSFVGLSVILFATNVMSLDRLLLASLLTVYMYVAWSTDDKDVAYQKQQLRNKKHELKAQ</sequence>
<reference key="1">
    <citation type="journal article" date="2005" name="Genome Res.">
        <title>Comparative genome sequencing of Drosophila pseudoobscura: chromosomal, gene, and cis-element evolution.</title>
        <authorList>
            <person name="Richards S."/>
            <person name="Liu Y."/>
            <person name="Bettencourt B.R."/>
            <person name="Hradecky P."/>
            <person name="Letovsky S."/>
            <person name="Nielsen R."/>
            <person name="Thornton K."/>
            <person name="Hubisz M.J."/>
            <person name="Chen R."/>
            <person name="Meisel R.P."/>
            <person name="Couronne O."/>
            <person name="Hua S."/>
            <person name="Smith M.A."/>
            <person name="Zhang P."/>
            <person name="Liu J."/>
            <person name="Bussemaker H.J."/>
            <person name="van Batenburg M.F."/>
            <person name="Howells S.L."/>
            <person name="Scherer S.E."/>
            <person name="Sodergren E."/>
            <person name="Matthews B.B."/>
            <person name="Crosby M.A."/>
            <person name="Schroeder A.J."/>
            <person name="Ortiz-Barrientos D."/>
            <person name="Rives C.M."/>
            <person name="Metzker M.L."/>
            <person name="Muzny D.M."/>
            <person name="Scott G."/>
            <person name="Steffen D."/>
            <person name="Wheeler D.A."/>
            <person name="Worley K.C."/>
            <person name="Havlak P."/>
            <person name="Durbin K.J."/>
            <person name="Egan A."/>
            <person name="Gill R."/>
            <person name="Hume J."/>
            <person name="Morgan M.B."/>
            <person name="Miner G."/>
            <person name="Hamilton C."/>
            <person name="Huang Y."/>
            <person name="Waldron L."/>
            <person name="Verduzco D."/>
            <person name="Clerc-Blankenburg K.P."/>
            <person name="Dubchak I."/>
            <person name="Noor M.A.F."/>
            <person name="Anderson W."/>
            <person name="White K.P."/>
            <person name="Clark A.G."/>
            <person name="Schaeffer S.W."/>
            <person name="Gelbart W.M."/>
            <person name="Weinstock G.M."/>
            <person name="Gibbs R.A."/>
        </authorList>
    </citation>
    <scope>NUCLEOTIDE SEQUENCE [LARGE SCALE GENOMIC DNA]</scope>
    <source>
        <strain>MV2-25 / Tucson 14011-0121.94</strain>
    </source>
</reference>